<protein>
    <recommendedName>
        <fullName evidence="3">Small ribosomal subunit protein uS5z</fullName>
    </recommendedName>
    <alternativeName>
        <fullName>40S ribosomal protein S2-1</fullName>
    </alternativeName>
</protein>
<evidence type="ECO:0000255" key="1">
    <source>
        <dbReference type="PROSITE-ProRule" id="PRU00268"/>
    </source>
</evidence>
<evidence type="ECO:0000256" key="2">
    <source>
        <dbReference type="SAM" id="MobiDB-lite"/>
    </source>
</evidence>
<evidence type="ECO:0000303" key="3">
    <source>
    </source>
</evidence>
<evidence type="ECO:0000305" key="4"/>
<accession>Q8L8Y0</accession>
<accession>Q9LQC2</accession>
<accession>Q9SM07</accession>
<sequence length="284" mass="30741">MAERGGEGGAERGGDRGDFGRGFGGGRGGGRGRDRGPRGRGRRGGRASEETKWVPVTKLGRLVADNKITKLEQIYLHSLPVKEYQIIDHLVGPTLKDEVMKIMPVQKQTRAGQRTRFKAFVVVGDGNGHVGLGVKCSKEVATAIRGAIILAKLSVVPVRRGYWGNKIGKPHTVPCKVTGKCGSVTVRMVPAPRGSGIVAARVPKKVLQFAGIDDVFTSSRGSTKTLGNFVKATFDCLQKTYGFLTPEFWKETRFSRSPYQEHTDFLSTKAVSATKVITEGEDQA</sequence>
<name>RS21_ARATH</name>
<proteinExistence type="evidence at transcript level"/>
<comment type="similarity">
    <text evidence="4">Belongs to the universal ribosomal protein uS5 family.</text>
</comment>
<keyword id="KW-1185">Reference proteome</keyword>
<keyword id="KW-0687">Ribonucleoprotein</keyword>
<keyword id="KW-0689">Ribosomal protein</keyword>
<feature type="chain" id="PRO_0000250174" description="Small ribosomal subunit protein uS5z">
    <location>
        <begin position="1"/>
        <end position="284"/>
    </location>
</feature>
<feature type="domain" description="S5 DRBM" evidence="1">
    <location>
        <begin position="95"/>
        <end position="158"/>
    </location>
</feature>
<feature type="region of interest" description="Disordered" evidence="2">
    <location>
        <begin position="1"/>
        <end position="51"/>
    </location>
</feature>
<feature type="compositionally biased region" description="Basic and acidic residues" evidence="2">
    <location>
        <begin position="1"/>
        <end position="19"/>
    </location>
</feature>
<feature type="compositionally biased region" description="Gly residues" evidence="2">
    <location>
        <begin position="20"/>
        <end position="29"/>
    </location>
</feature>
<feature type="sequence conflict" description="In Ref. 5; AAM67061." evidence="4" ref="5">
    <original>A</original>
    <variation>T</variation>
    <location>
        <position position="10"/>
    </location>
</feature>
<dbReference type="EMBL" id="AB008016">
    <property type="protein sequence ID" value="BAA88263.1"/>
    <property type="molecule type" value="mRNA"/>
</dbReference>
<dbReference type="EMBL" id="AB077822">
    <property type="protein sequence ID" value="BAB83870.1"/>
    <property type="molecule type" value="Genomic_DNA"/>
</dbReference>
<dbReference type="EMBL" id="AC008051">
    <property type="protein sequence ID" value="AAF82250.1"/>
    <property type="molecule type" value="Genomic_DNA"/>
</dbReference>
<dbReference type="EMBL" id="AC082643">
    <property type="protein sequence ID" value="AAG50639.1"/>
    <property type="molecule type" value="Genomic_DNA"/>
</dbReference>
<dbReference type="EMBL" id="CP002684">
    <property type="protein sequence ID" value="AEE33543.1"/>
    <property type="molecule type" value="Genomic_DNA"/>
</dbReference>
<dbReference type="EMBL" id="AF386958">
    <property type="protein sequence ID" value="AAK62403.1"/>
    <property type="molecule type" value="mRNA"/>
</dbReference>
<dbReference type="EMBL" id="AY072528">
    <property type="protein sequence ID" value="AAL66943.1"/>
    <property type="molecule type" value="mRNA"/>
</dbReference>
<dbReference type="EMBL" id="AY088743">
    <property type="protein sequence ID" value="AAM67061.1"/>
    <property type="molecule type" value="mRNA"/>
</dbReference>
<dbReference type="PIR" id="T50673">
    <property type="entry name" value="T50673"/>
</dbReference>
<dbReference type="RefSeq" id="NP_176134.1">
    <property type="nucleotide sequence ID" value="NM_104618.3"/>
</dbReference>
<dbReference type="SMR" id="Q8L8Y0"/>
<dbReference type="BioGRID" id="27432">
    <property type="interactions" value="110"/>
</dbReference>
<dbReference type="FunCoup" id="Q8L8Y0">
    <property type="interactions" value="3645"/>
</dbReference>
<dbReference type="IntAct" id="Q8L8Y0">
    <property type="interactions" value="2"/>
</dbReference>
<dbReference type="STRING" id="3702.Q8L8Y0"/>
<dbReference type="iPTMnet" id="Q8L8Y0"/>
<dbReference type="PaxDb" id="3702-AT1G58380.1"/>
<dbReference type="EnsemblPlants" id="AT1G58380.1">
    <property type="protein sequence ID" value="AT1G58380.1"/>
    <property type="gene ID" value="AT1G58380"/>
</dbReference>
<dbReference type="GeneID" id="842207"/>
<dbReference type="Gramene" id="AT1G58380.1">
    <property type="protein sequence ID" value="AT1G58380.1"/>
    <property type="gene ID" value="AT1G58380"/>
</dbReference>
<dbReference type="KEGG" id="ath:AT1G58380"/>
<dbReference type="Araport" id="AT1G58380"/>
<dbReference type="TAIR" id="AT1G58380">
    <property type="gene designation" value="XW6"/>
</dbReference>
<dbReference type="eggNOG" id="KOG0877">
    <property type="taxonomic scope" value="Eukaryota"/>
</dbReference>
<dbReference type="HOGENOM" id="CLU_065898_0_2_1"/>
<dbReference type="InParanoid" id="Q8L8Y0"/>
<dbReference type="OMA" id="LTPVIPW"/>
<dbReference type="PhylomeDB" id="Q8L8Y0"/>
<dbReference type="PRO" id="PR:Q8L8Y0"/>
<dbReference type="Proteomes" id="UP000006548">
    <property type="component" value="Chromosome 1"/>
</dbReference>
<dbReference type="ExpressionAtlas" id="Q8L8Y0">
    <property type="expression patterns" value="baseline and differential"/>
</dbReference>
<dbReference type="GO" id="GO:0022627">
    <property type="term" value="C:cytosolic small ribosomal subunit"/>
    <property type="evidence" value="ECO:0007005"/>
    <property type="project" value="TAIR"/>
</dbReference>
<dbReference type="GO" id="GO:0005634">
    <property type="term" value="C:nucleus"/>
    <property type="evidence" value="ECO:0007005"/>
    <property type="project" value="TAIR"/>
</dbReference>
<dbReference type="GO" id="GO:0009506">
    <property type="term" value="C:plasmodesma"/>
    <property type="evidence" value="ECO:0007005"/>
    <property type="project" value="TAIR"/>
</dbReference>
<dbReference type="GO" id="GO:0003729">
    <property type="term" value="F:mRNA binding"/>
    <property type="evidence" value="ECO:0000314"/>
    <property type="project" value="TAIR"/>
</dbReference>
<dbReference type="GO" id="GO:0003735">
    <property type="term" value="F:structural constituent of ribosome"/>
    <property type="evidence" value="ECO:0000314"/>
    <property type="project" value="CAFA"/>
</dbReference>
<dbReference type="GO" id="GO:0006412">
    <property type="term" value="P:translation"/>
    <property type="evidence" value="ECO:0007669"/>
    <property type="project" value="InterPro"/>
</dbReference>
<dbReference type="FunFam" id="3.30.160.20:FF:000002">
    <property type="entry name" value="40S ribosomal protein S2"/>
    <property type="match status" value="1"/>
</dbReference>
<dbReference type="FunFam" id="3.30.230.10:FF:000004">
    <property type="entry name" value="40S ribosomal protein S2"/>
    <property type="match status" value="1"/>
</dbReference>
<dbReference type="Gene3D" id="3.30.160.20">
    <property type="match status" value="1"/>
</dbReference>
<dbReference type="Gene3D" id="3.30.230.10">
    <property type="match status" value="1"/>
</dbReference>
<dbReference type="InterPro" id="IPR020568">
    <property type="entry name" value="Ribosomal_Su5_D2-typ_SF"/>
</dbReference>
<dbReference type="InterPro" id="IPR000851">
    <property type="entry name" value="Ribosomal_uS5"/>
</dbReference>
<dbReference type="InterPro" id="IPR005324">
    <property type="entry name" value="Ribosomal_uS5_C"/>
</dbReference>
<dbReference type="InterPro" id="IPR005711">
    <property type="entry name" value="Ribosomal_uS5_euk/arc"/>
</dbReference>
<dbReference type="InterPro" id="IPR013810">
    <property type="entry name" value="Ribosomal_uS5_N"/>
</dbReference>
<dbReference type="InterPro" id="IPR018192">
    <property type="entry name" value="Ribosomal_uS5_N_CS"/>
</dbReference>
<dbReference type="InterPro" id="IPR014721">
    <property type="entry name" value="Ribsml_uS5_D2-typ_fold_subgr"/>
</dbReference>
<dbReference type="NCBIfam" id="TIGR01020">
    <property type="entry name" value="uS5_euk_arch"/>
    <property type="match status" value="1"/>
</dbReference>
<dbReference type="PANTHER" id="PTHR13718">
    <property type="entry name" value="RIBOSOMAL S SUBUNIT"/>
    <property type="match status" value="1"/>
</dbReference>
<dbReference type="PANTHER" id="PTHR13718:SF115">
    <property type="entry name" value="SMALL RIBOSOMAL SUBUNIT PROTEIN US5W-RELATED"/>
    <property type="match status" value="1"/>
</dbReference>
<dbReference type="Pfam" id="PF00333">
    <property type="entry name" value="Ribosomal_S5"/>
    <property type="match status" value="1"/>
</dbReference>
<dbReference type="Pfam" id="PF03719">
    <property type="entry name" value="Ribosomal_S5_C"/>
    <property type="match status" value="1"/>
</dbReference>
<dbReference type="SUPFAM" id="SSF54768">
    <property type="entry name" value="dsRNA-binding domain-like"/>
    <property type="match status" value="1"/>
</dbReference>
<dbReference type="SUPFAM" id="SSF54211">
    <property type="entry name" value="Ribosomal protein S5 domain 2-like"/>
    <property type="match status" value="1"/>
</dbReference>
<dbReference type="PROSITE" id="PS00585">
    <property type="entry name" value="RIBOSOMAL_S5"/>
    <property type="match status" value="1"/>
</dbReference>
<dbReference type="PROSITE" id="PS50881">
    <property type="entry name" value="S5_DSRBD"/>
    <property type="match status" value="1"/>
</dbReference>
<reference key="1">
    <citation type="journal article" date="1999" name="Gene">
        <title>Isolation and analysis of cDNA within a 300 kb Arabidopsis thaliana genomic region located around the 100 map unit of chromosome 1.</title>
        <authorList>
            <person name="Kato A."/>
            <person name="Suzuki M."/>
            <person name="Kuwahara A."/>
            <person name="Ooe H."/>
            <person name="Higano-Inaba K."/>
            <person name="Komeda Y."/>
        </authorList>
    </citation>
    <scope>NUCLEOTIDE SEQUENCE [GENOMIC DNA / MRNA]</scope>
    <source>
        <strain>cv. Columbia</strain>
    </source>
</reference>
<reference key="2">
    <citation type="journal article" date="2000" name="Nature">
        <title>Sequence and analysis of chromosome 1 of the plant Arabidopsis thaliana.</title>
        <authorList>
            <person name="Theologis A."/>
            <person name="Ecker J.R."/>
            <person name="Palm C.J."/>
            <person name="Federspiel N.A."/>
            <person name="Kaul S."/>
            <person name="White O."/>
            <person name="Alonso J."/>
            <person name="Altafi H."/>
            <person name="Araujo R."/>
            <person name="Bowman C.L."/>
            <person name="Brooks S.Y."/>
            <person name="Buehler E."/>
            <person name="Chan A."/>
            <person name="Chao Q."/>
            <person name="Chen H."/>
            <person name="Cheuk R.F."/>
            <person name="Chin C.W."/>
            <person name="Chung M.K."/>
            <person name="Conn L."/>
            <person name="Conway A.B."/>
            <person name="Conway A.R."/>
            <person name="Creasy T.H."/>
            <person name="Dewar K."/>
            <person name="Dunn P."/>
            <person name="Etgu P."/>
            <person name="Feldblyum T.V."/>
            <person name="Feng J.-D."/>
            <person name="Fong B."/>
            <person name="Fujii C.Y."/>
            <person name="Gill J.E."/>
            <person name="Goldsmith A.D."/>
            <person name="Haas B."/>
            <person name="Hansen N.F."/>
            <person name="Hughes B."/>
            <person name="Huizar L."/>
            <person name="Hunter J.L."/>
            <person name="Jenkins J."/>
            <person name="Johnson-Hopson C."/>
            <person name="Khan S."/>
            <person name="Khaykin E."/>
            <person name="Kim C.J."/>
            <person name="Koo H.L."/>
            <person name="Kremenetskaia I."/>
            <person name="Kurtz D.B."/>
            <person name="Kwan A."/>
            <person name="Lam B."/>
            <person name="Langin-Hooper S."/>
            <person name="Lee A."/>
            <person name="Lee J.M."/>
            <person name="Lenz C.A."/>
            <person name="Li J.H."/>
            <person name="Li Y.-P."/>
            <person name="Lin X."/>
            <person name="Liu S.X."/>
            <person name="Liu Z.A."/>
            <person name="Luros J.S."/>
            <person name="Maiti R."/>
            <person name="Marziali A."/>
            <person name="Militscher J."/>
            <person name="Miranda M."/>
            <person name="Nguyen M."/>
            <person name="Nierman W.C."/>
            <person name="Osborne B.I."/>
            <person name="Pai G."/>
            <person name="Peterson J."/>
            <person name="Pham P.K."/>
            <person name="Rizzo M."/>
            <person name="Rooney T."/>
            <person name="Rowley D."/>
            <person name="Sakano H."/>
            <person name="Salzberg S.L."/>
            <person name="Schwartz J.R."/>
            <person name="Shinn P."/>
            <person name="Southwick A.M."/>
            <person name="Sun H."/>
            <person name="Tallon L.J."/>
            <person name="Tambunga G."/>
            <person name="Toriumi M.J."/>
            <person name="Town C.D."/>
            <person name="Utterback T."/>
            <person name="Van Aken S."/>
            <person name="Vaysberg M."/>
            <person name="Vysotskaia V.S."/>
            <person name="Walker M."/>
            <person name="Wu D."/>
            <person name="Yu G."/>
            <person name="Fraser C.M."/>
            <person name="Venter J.C."/>
            <person name="Davis R.W."/>
        </authorList>
    </citation>
    <scope>NUCLEOTIDE SEQUENCE [LARGE SCALE GENOMIC DNA]</scope>
    <source>
        <strain>cv. Columbia</strain>
    </source>
</reference>
<reference key="3">
    <citation type="journal article" date="2017" name="Plant J.">
        <title>Araport11: a complete reannotation of the Arabidopsis thaliana reference genome.</title>
        <authorList>
            <person name="Cheng C.Y."/>
            <person name="Krishnakumar V."/>
            <person name="Chan A.P."/>
            <person name="Thibaud-Nissen F."/>
            <person name="Schobel S."/>
            <person name="Town C.D."/>
        </authorList>
    </citation>
    <scope>GENOME REANNOTATION</scope>
    <source>
        <strain>cv. Columbia</strain>
    </source>
</reference>
<reference key="4">
    <citation type="journal article" date="2003" name="Science">
        <title>Empirical analysis of transcriptional activity in the Arabidopsis genome.</title>
        <authorList>
            <person name="Yamada K."/>
            <person name="Lim J."/>
            <person name="Dale J.M."/>
            <person name="Chen H."/>
            <person name="Shinn P."/>
            <person name="Palm C.J."/>
            <person name="Southwick A.M."/>
            <person name="Wu H.C."/>
            <person name="Kim C.J."/>
            <person name="Nguyen M."/>
            <person name="Pham P.K."/>
            <person name="Cheuk R.F."/>
            <person name="Karlin-Newmann G."/>
            <person name="Liu S.X."/>
            <person name="Lam B."/>
            <person name="Sakano H."/>
            <person name="Wu T."/>
            <person name="Yu G."/>
            <person name="Miranda M."/>
            <person name="Quach H.L."/>
            <person name="Tripp M."/>
            <person name="Chang C.H."/>
            <person name="Lee J.M."/>
            <person name="Toriumi M.J."/>
            <person name="Chan M.M."/>
            <person name="Tang C.C."/>
            <person name="Onodera C.S."/>
            <person name="Deng J.M."/>
            <person name="Akiyama K."/>
            <person name="Ansari Y."/>
            <person name="Arakawa T."/>
            <person name="Banh J."/>
            <person name="Banno F."/>
            <person name="Bowser L."/>
            <person name="Brooks S.Y."/>
            <person name="Carninci P."/>
            <person name="Chao Q."/>
            <person name="Choy N."/>
            <person name="Enju A."/>
            <person name="Goldsmith A.D."/>
            <person name="Gurjal M."/>
            <person name="Hansen N.F."/>
            <person name="Hayashizaki Y."/>
            <person name="Johnson-Hopson C."/>
            <person name="Hsuan V.W."/>
            <person name="Iida K."/>
            <person name="Karnes M."/>
            <person name="Khan S."/>
            <person name="Koesema E."/>
            <person name="Ishida J."/>
            <person name="Jiang P.X."/>
            <person name="Jones T."/>
            <person name="Kawai J."/>
            <person name="Kamiya A."/>
            <person name="Meyers C."/>
            <person name="Nakajima M."/>
            <person name="Narusaka M."/>
            <person name="Seki M."/>
            <person name="Sakurai T."/>
            <person name="Satou M."/>
            <person name="Tamse R."/>
            <person name="Vaysberg M."/>
            <person name="Wallender E.K."/>
            <person name="Wong C."/>
            <person name="Yamamura Y."/>
            <person name="Yuan S."/>
            <person name="Shinozaki K."/>
            <person name="Davis R.W."/>
            <person name="Theologis A."/>
            <person name="Ecker J.R."/>
        </authorList>
    </citation>
    <scope>NUCLEOTIDE SEQUENCE [LARGE SCALE MRNA]</scope>
    <source>
        <strain>cv. Columbia</strain>
    </source>
</reference>
<reference key="5">
    <citation type="submission" date="2002-03" db="EMBL/GenBank/DDBJ databases">
        <title>Full-length cDNA from Arabidopsis thaliana.</title>
        <authorList>
            <person name="Brover V.V."/>
            <person name="Troukhan M.E."/>
            <person name="Alexandrov N.A."/>
            <person name="Lu Y.-P."/>
            <person name="Flavell R.B."/>
            <person name="Feldmann K.A."/>
        </authorList>
    </citation>
    <scope>NUCLEOTIDE SEQUENCE [LARGE SCALE MRNA]</scope>
</reference>
<reference key="6">
    <citation type="journal article" date="2001" name="Plant Physiol.">
        <title>The organization of cytoplasmic ribosomal protein genes in the Arabidopsis genome.</title>
        <authorList>
            <person name="Barakat A."/>
            <person name="Szick-Miranda K."/>
            <person name="Chang I.-F."/>
            <person name="Guyot R."/>
            <person name="Blanc G."/>
            <person name="Cooke R."/>
            <person name="Delseny M."/>
            <person name="Bailey-Serres J."/>
        </authorList>
    </citation>
    <scope>GENE FAMILY ORGANIZATION</scope>
    <scope>NOMENCLATURE</scope>
</reference>
<reference key="7">
    <citation type="journal article" date="2023" name="Plant Cell">
        <title>An updated nomenclature for plant ribosomal protein genes.</title>
        <authorList>
            <person name="Scarpin M.R."/>
            <person name="Busche M."/>
            <person name="Martinez R.E."/>
            <person name="Harper L.C."/>
            <person name="Reiser L."/>
            <person name="Szakonyi D."/>
            <person name="Merchante C."/>
            <person name="Lan T."/>
            <person name="Xiong W."/>
            <person name="Mo B."/>
            <person name="Tang G."/>
            <person name="Chen X."/>
            <person name="Bailey-Serres J."/>
            <person name="Browning K.S."/>
            <person name="Brunkard J.O."/>
        </authorList>
    </citation>
    <scope>NOMENCLATURE</scope>
</reference>
<organism>
    <name type="scientific">Arabidopsis thaliana</name>
    <name type="common">Mouse-ear cress</name>
    <dbReference type="NCBI Taxonomy" id="3702"/>
    <lineage>
        <taxon>Eukaryota</taxon>
        <taxon>Viridiplantae</taxon>
        <taxon>Streptophyta</taxon>
        <taxon>Embryophyta</taxon>
        <taxon>Tracheophyta</taxon>
        <taxon>Spermatophyta</taxon>
        <taxon>Magnoliopsida</taxon>
        <taxon>eudicotyledons</taxon>
        <taxon>Gunneridae</taxon>
        <taxon>Pentapetalae</taxon>
        <taxon>rosids</taxon>
        <taxon>malvids</taxon>
        <taxon>Brassicales</taxon>
        <taxon>Brassicaceae</taxon>
        <taxon>Camelineae</taxon>
        <taxon>Arabidopsis</taxon>
    </lineage>
</organism>
<gene>
    <name type="primary">RPS2A</name>
    <name type="synonym">XW6</name>
    <name type="ordered locus">At1g58380</name>
    <name type="ORF">F19C14.1</name>
    <name type="ORF">F9K23.9</name>
</gene>